<comment type="function">
    <text evidence="1">Plays a critical role in the incorporation of lipoproteins in the outer membrane after they are released by the LolA protein.</text>
</comment>
<comment type="subunit">
    <text evidence="1">Monomer.</text>
</comment>
<comment type="subcellular location">
    <subcellularLocation>
        <location evidence="1">Cell outer membrane</location>
        <topology evidence="1">Lipid-anchor</topology>
    </subcellularLocation>
</comment>
<comment type="similarity">
    <text evidence="1">Belongs to the LolB family.</text>
</comment>
<gene>
    <name evidence="1" type="primary">lolB</name>
    <name type="ordered locus">PSPA7_5317</name>
</gene>
<keyword id="KW-0998">Cell outer membrane</keyword>
<keyword id="KW-0143">Chaperone</keyword>
<keyword id="KW-0449">Lipoprotein</keyword>
<keyword id="KW-0472">Membrane</keyword>
<keyword id="KW-0564">Palmitate</keyword>
<keyword id="KW-0653">Protein transport</keyword>
<keyword id="KW-0732">Signal</keyword>
<keyword id="KW-0813">Transport</keyword>
<proteinExistence type="inferred from homology"/>
<reference key="1">
    <citation type="submission" date="2007-06" db="EMBL/GenBank/DDBJ databases">
        <authorList>
            <person name="Dodson R.J."/>
            <person name="Harkins D."/>
            <person name="Paulsen I.T."/>
        </authorList>
    </citation>
    <scope>NUCLEOTIDE SEQUENCE [LARGE SCALE GENOMIC DNA]</scope>
    <source>
        <strain>DSM 24068 / PA7</strain>
    </source>
</reference>
<protein>
    <recommendedName>
        <fullName evidence="1">Outer-membrane lipoprotein LolB</fullName>
    </recommendedName>
</protein>
<accession>A6VC64</accession>
<feature type="signal peptide" evidence="1">
    <location>
        <begin position="1"/>
        <end position="17"/>
    </location>
</feature>
<feature type="chain" id="PRO_1000021666" description="Outer-membrane lipoprotein LolB">
    <location>
        <begin position="18"/>
        <end position="205"/>
    </location>
</feature>
<feature type="lipid moiety-binding region" description="N-palmitoyl cysteine" evidence="1">
    <location>
        <position position="18"/>
    </location>
</feature>
<feature type="lipid moiety-binding region" description="S-diacylglycerol cysteine" evidence="1">
    <location>
        <position position="18"/>
    </location>
</feature>
<dbReference type="EMBL" id="CP000744">
    <property type="protein sequence ID" value="ABR80866.1"/>
    <property type="molecule type" value="Genomic_DNA"/>
</dbReference>
<dbReference type="RefSeq" id="WP_012077389.1">
    <property type="nucleotide sequence ID" value="NC_009656.1"/>
</dbReference>
<dbReference type="SMR" id="A6VC64"/>
<dbReference type="KEGG" id="pap:PSPA7_5317"/>
<dbReference type="HOGENOM" id="CLU_092816_2_1_6"/>
<dbReference type="Proteomes" id="UP000001582">
    <property type="component" value="Chromosome"/>
</dbReference>
<dbReference type="GO" id="GO:0009279">
    <property type="term" value="C:cell outer membrane"/>
    <property type="evidence" value="ECO:0007669"/>
    <property type="project" value="UniProtKB-SubCell"/>
</dbReference>
<dbReference type="GO" id="GO:0044874">
    <property type="term" value="P:lipoprotein localization to outer membrane"/>
    <property type="evidence" value="ECO:0007669"/>
    <property type="project" value="UniProtKB-UniRule"/>
</dbReference>
<dbReference type="GO" id="GO:0015031">
    <property type="term" value="P:protein transport"/>
    <property type="evidence" value="ECO:0007669"/>
    <property type="project" value="UniProtKB-KW"/>
</dbReference>
<dbReference type="CDD" id="cd16326">
    <property type="entry name" value="LolB"/>
    <property type="match status" value="1"/>
</dbReference>
<dbReference type="Gene3D" id="2.50.20.10">
    <property type="entry name" value="Lipoprotein localisation LolA/LolB/LppX"/>
    <property type="match status" value="1"/>
</dbReference>
<dbReference type="HAMAP" id="MF_00233">
    <property type="entry name" value="LolB"/>
    <property type="match status" value="1"/>
</dbReference>
<dbReference type="InterPro" id="IPR029046">
    <property type="entry name" value="LolA/LolB/LppX"/>
</dbReference>
<dbReference type="InterPro" id="IPR004565">
    <property type="entry name" value="OM_lipoprot_LolB"/>
</dbReference>
<dbReference type="NCBIfam" id="TIGR00548">
    <property type="entry name" value="lolB"/>
    <property type="match status" value="1"/>
</dbReference>
<dbReference type="Pfam" id="PF03550">
    <property type="entry name" value="LolB"/>
    <property type="match status" value="1"/>
</dbReference>
<dbReference type="SUPFAM" id="SSF89392">
    <property type="entry name" value="Prokaryotic lipoproteins and lipoprotein localization factors"/>
    <property type="match status" value="1"/>
</dbReference>
<dbReference type="PROSITE" id="PS51257">
    <property type="entry name" value="PROKAR_LIPOPROTEIN"/>
    <property type="match status" value="1"/>
</dbReference>
<evidence type="ECO:0000255" key="1">
    <source>
        <dbReference type="HAMAP-Rule" id="MF_00233"/>
    </source>
</evidence>
<sequence length="205" mass="23041">MRLRLFLAASALALLSGCAGLTSHEALEGQGDAQTWKTHKQQLSELDAWQIDGKVGIRAPRDSGSGTLFWLQRQGYYDIRLSGPLGRGAARLTGREGAVSLEVAGQGRYQAESPEALLEQQLGWRLPVSHLLWWVRGLPAPDSKSRLTLDADSRLARLEQDGWQIEYTRYAEQNGYWLPERLKLHGQDLDITLVIKDWQPRQLGR</sequence>
<organism>
    <name type="scientific">Pseudomonas paraeruginosa (strain DSM 24068 / PA7)</name>
    <name type="common">Pseudomonas aeruginosa (strain PA7)</name>
    <dbReference type="NCBI Taxonomy" id="381754"/>
    <lineage>
        <taxon>Bacteria</taxon>
        <taxon>Pseudomonadati</taxon>
        <taxon>Pseudomonadota</taxon>
        <taxon>Gammaproteobacteria</taxon>
        <taxon>Pseudomonadales</taxon>
        <taxon>Pseudomonadaceae</taxon>
        <taxon>Pseudomonas</taxon>
        <taxon>Pseudomonas paraeruginosa</taxon>
    </lineage>
</organism>
<name>LOLB_PSEP7</name>